<comment type="function">
    <text evidence="2">IMP-specific 5'-nucleotidase involved in IMP (inositol monophosphate) degradation.</text>
</comment>
<comment type="catalytic activity">
    <reaction evidence="2">
        <text>IMP + H2O = inosine + phosphate</text>
        <dbReference type="Rhea" id="RHEA:27718"/>
        <dbReference type="ChEBI" id="CHEBI:15377"/>
        <dbReference type="ChEBI" id="CHEBI:17596"/>
        <dbReference type="ChEBI" id="CHEBI:43474"/>
        <dbReference type="ChEBI" id="CHEBI:58053"/>
        <dbReference type="EC" id="3.1.3.99"/>
    </reaction>
</comment>
<comment type="cofactor">
    <cofactor evidence="2">
        <name>Mg(2+)</name>
        <dbReference type="ChEBI" id="CHEBI:18420"/>
    </cofactor>
</comment>
<comment type="activity regulation">
    <text evidence="1 2">Allosterically activated by ATP (By similarity). ATP binding is a prerequisite to magnesium and substrate binding. ATP binds to 2 of the subunits in the homotetramer inducing a closure of these 2 subunits and the release of the C-terminal loop, thereby activating the enzyme (By similarity).</text>
</comment>
<comment type="subunit">
    <text evidence="2">Homotetramer.</text>
</comment>
<comment type="similarity">
    <text evidence="3">Belongs to the ISN1 family.</text>
</comment>
<feature type="chain" id="PRO_0000084249" description="IMP-specific 5'-nucleotidase 1">
    <location>
        <begin position="1"/>
        <end position="447"/>
    </location>
</feature>
<feature type="active site" description="Nucleophile" evidence="1">
    <location>
        <position position="172"/>
    </location>
</feature>
<feature type="active site" description="Proton donor" evidence="1">
    <location>
        <position position="174"/>
    </location>
</feature>
<feature type="binding site" evidence="1">
    <location>
        <position position="126"/>
    </location>
    <ligand>
        <name>ATP</name>
        <dbReference type="ChEBI" id="CHEBI:30616"/>
        <note>allosteric activator</note>
    </ligand>
</feature>
<feature type="binding site" evidence="1">
    <location>
        <position position="144"/>
    </location>
    <ligand>
        <name>ATP</name>
        <dbReference type="ChEBI" id="CHEBI:30616"/>
        <note>allosteric activator</note>
    </ligand>
</feature>
<feature type="binding site" evidence="1">
    <location>
        <position position="172"/>
    </location>
    <ligand>
        <name>IMP</name>
        <dbReference type="ChEBI" id="CHEBI:58053"/>
    </ligand>
</feature>
<feature type="binding site" evidence="1">
    <location>
        <position position="172"/>
    </location>
    <ligand>
        <name>Mg(2+)</name>
        <dbReference type="ChEBI" id="CHEBI:18420"/>
    </ligand>
</feature>
<feature type="binding site" evidence="1">
    <location>
        <position position="174"/>
    </location>
    <ligand>
        <name>IMP</name>
        <dbReference type="ChEBI" id="CHEBI:58053"/>
    </ligand>
</feature>
<feature type="binding site" evidence="1">
    <location>
        <position position="174"/>
    </location>
    <ligand>
        <name>Mg(2+)</name>
        <dbReference type="ChEBI" id="CHEBI:18420"/>
    </ligand>
</feature>
<feature type="binding site" evidence="1">
    <location>
        <position position="180"/>
    </location>
    <ligand>
        <name>IMP</name>
        <dbReference type="ChEBI" id="CHEBI:58053"/>
    </ligand>
</feature>
<feature type="binding site" evidence="1">
    <location>
        <position position="208"/>
    </location>
    <ligand>
        <name>IMP</name>
        <dbReference type="ChEBI" id="CHEBI:58053"/>
    </ligand>
</feature>
<feature type="binding site" evidence="1">
    <location>
        <position position="373"/>
    </location>
    <ligand>
        <name>IMP</name>
        <dbReference type="ChEBI" id="CHEBI:58053"/>
    </ligand>
</feature>
<feature type="binding site" evidence="1">
    <location>
        <position position="381"/>
    </location>
    <ligand>
        <name>IMP</name>
        <dbReference type="ChEBI" id="CHEBI:58053"/>
    </ligand>
</feature>
<feature type="binding site" evidence="1">
    <location>
        <position position="408"/>
    </location>
    <ligand>
        <name>Mg(2+)</name>
        <dbReference type="ChEBI" id="CHEBI:18420"/>
    </ligand>
</feature>
<sequence length="447" mass="50888">MSSRYRVEYHLKSHRKDGFIDWIKGLLAAPFVLHAVSHDGDDNDELATTQRVRSQYAEIFKDIESLVSDKILFDERNDQYRQYIESNDVEEVIPLGQPRLDLLVPTIGTFFTQLPLEKAFLWEDARKAISSRRMVAPSFNDIRHILNTAQVFHFIKQRKLKSKDQLRMCTFDGDVTLYEDGGSIVNTNPVIPLLVKLLSEGVCIGIVTAAGYDEAKTYESRLNGLITALNGSDLPYAKKRNLCVMGGESNYLFRYYEDGESFGFEAIDKEGWLLPRMCTWSQDDLTQTLDFAEKTLYRLKKRLNLPEEAIIMRKARAVGIVPGHFKDPETGNMVKIQLDREQLEEVVLTLQNSLEGFAPAQRIQYSCFDGGSDVWCDIGGKDLGVRALQHYYDPENPIKPSQTLHVGDQFAPVGSANDFKARLAGCTLWISSPKETVEYLRRLIHDE</sequence>
<accession>Q6FLD4</accession>
<proteinExistence type="inferred from homology"/>
<evidence type="ECO:0000250" key="1">
    <source>
        <dbReference type="UniProtKB" id="A0A144A134"/>
    </source>
</evidence>
<evidence type="ECO:0000250" key="2">
    <source>
        <dbReference type="UniProtKB" id="Q99312"/>
    </source>
</evidence>
<evidence type="ECO:0000305" key="3"/>
<organism>
    <name type="scientific">Candida glabrata (strain ATCC 2001 / BCRC 20586 / JCM 3761 / NBRC 0622 / NRRL Y-65 / CBS 138)</name>
    <name type="common">Yeast</name>
    <name type="synonym">Nakaseomyces glabratus</name>
    <dbReference type="NCBI Taxonomy" id="284593"/>
    <lineage>
        <taxon>Eukaryota</taxon>
        <taxon>Fungi</taxon>
        <taxon>Dikarya</taxon>
        <taxon>Ascomycota</taxon>
        <taxon>Saccharomycotina</taxon>
        <taxon>Saccharomycetes</taxon>
        <taxon>Saccharomycetales</taxon>
        <taxon>Saccharomycetaceae</taxon>
        <taxon>Nakaseomyces</taxon>
    </lineage>
</organism>
<dbReference type="EC" id="3.1.3.99" evidence="2"/>
<dbReference type="EMBL" id="CR380958">
    <property type="protein sequence ID" value="CAG61930.1"/>
    <property type="molecule type" value="Genomic_DNA"/>
</dbReference>
<dbReference type="RefSeq" id="XP_448960.1">
    <property type="nucleotide sequence ID" value="XM_448960.1"/>
</dbReference>
<dbReference type="SMR" id="Q6FLD4"/>
<dbReference type="FunCoup" id="Q6FLD4">
    <property type="interactions" value="102"/>
</dbReference>
<dbReference type="STRING" id="284593.Q6FLD4"/>
<dbReference type="EnsemblFungi" id="CAGL0L04268g-T">
    <property type="protein sequence ID" value="CAGL0L04268g-T-p1"/>
    <property type="gene ID" value="CAGL0L04268g"/>
</dbReference>
<dbReference type="KEGG" id="cgr:2890774"/>
<dbReference type="CGD" id="CAL0135600">
    <property type="gene designation" value="CAGL0L04268g"/>
</dbReference>
<dbReference type="VEuPathDB" id="FungiDB:B1J91_L04268g"/>
<dbReference type="VEuPathDB" id="FungiDB:CAGL0L04268g"/>
<dbReference type="eggNOG" id="ENOG502QR24">
    <property type="taxonomic scope" value="Eukaryota"/>
</dbReference>
<dbReference type="HOGENOM" id="CLU_031816_1_0_1"/>
<dbReference type="InParanoid" id="Q6FLD4"/>
<dbReference type="OMA" id="WGVLACQ"/>
<dbReference type="Proteomes" id="UP000002428">
    <property type="component" value="Chromosome L"/>
</dbReference>
<dbReference type="GO" id="GO:0005524">
    <property type="term" value="F:ATP binding"/>
    <property type="evidence" value="ECO:0007669"/>
    <property type="project" value="UniProtKB-KW"/>
</dbReference>
<dbReference type="GO" id="GO:0050483">
    <property type="term" value="F:IMP 5'-nucleotidase activity"/>
    <property type="evidence" value="ECO:0007669"/>
    <property type="project" value="EnsemblFungi"/>
</dbReference>
<dbReference type="GO" id="GO:0000287">
    <property type="term" value="F:magnesium ion binding"/>
    <property type="evidence" value="ECO:0007669"/>
    <property type="project" value="InterPro"/>
</dbReference>
<dbReference type="GO" id="GO:0006190">
    <property type="term" value="P:inosine salvage"/>
    <property type="evidence" value="ECO:0007669"/>
    <property type="project" value="EnsemblFungi"/>
</dbReference>
<dbReference type="GO" id="GO:0071590">
    <property type="term" value="P:nicotinamide riboside biosynthetic process"/>
    <property type="evidence" value="ECO:0007669"/>
    <property type="project" value="EnsemblFungi"/>
</dbReference>
<dbReference type="GO" id="GO:0071592">
    <property type="term" value="P:nicotinic acid riboside biosynthetic process"/>
    <property type="evidence" value="ECO:0007669"/>
    <property type="project" value="EnsemblFungi"/>
</dbReference>
<dbReference type="GO" id="GO:0009117">
    <property type="term" value="P:nucleotide metabolic process"/>
    <property type="evidence" value="ECO:0007669"/>
    <property type="project" value="UniProtKB-KW"/>
</dbReference>
<dbReference type="InterPro" id="IPR036412">
    <property type="entry name" value="HAD-like_sf"/>
</dbReference>
<dbReference type="InterPro" id="IPR009453">
    <property type="entry name" value="ISN1"/>
</dbReference>
<dbReference type="PANTHER" id="PTHR28213">
    <property type="entry name" value="IMP-SPECIFIC 5'-NUCLEOTIDASE 1"/>
    <property type="match status" value="1"/>
</dbReference>
<dbReference type="PANTHER" id="PTHR28213:SF1">
    <property type="entry name" value="IMP-SPECIFIC 5'-NUCLEOTIDASE 1"/>
    <property type="match status" value="1"/>
</dbReference>
<dbReference type="Pfam" id="PF06437">
    <property type="entry name" value="ISN1"/>
    <property type="match status" value="1"/>
</dbReference>
<dbReference type="PIRSF" id="PIRSF028836">
    <property type="entry name" value="ISN1"/>
    <property type="match status" value="1"/>
</dbReference>
<dbReference type="SUPFAM" id="SSF56784">
    <property type="entry name" value="HAD-like"/>
    <property type="match status" value="1"/>
</dbReference>
<protein>
    <recommendedName>
        <fullName>IMP-specific 5'-nucleotidase 1</fullName>
        <ecNumber evidence="2">3.1.3.99</ecNumber>
    </recommendedName>
</protein>
<name>ISN1_CANGA</name>
<gene>
    <name type="primary">ISN1</name>
    <name type="ordered locus">CAGL0L04268g</name>
</gene>
<keyword id="KW-0067">ATP-binding</keyword>
<keyword id="KW-0378">Hydrolase</keyword>
<keyword id="KW-0460">Magnesium</keyword>
<keyword id="KW-0479">Metal-binding</keyword>
<keyword id="KW-0546">Nucleotide metabolism</keyword>
<keyword id="KW-0547">Nucleotide-binding</keyword>
<keyword id="KW-1185">Reference proteome</keyword>
<reference key="1">
    <citation type="journal article" date="2004" name="Nature">
        <title>Genome evolution in yeasts.</title>
        <authorList>
            <person name="Dujon B."/>
            <person name="Sherman D."/>
            <person name="Fischer G."/>
            <person name="Durrens P."/>
            <person name="Casaregola S."/>
            <person name="Lafontaine I."/>
            <person name="de Montigny J."/>
            <person name="Marck C."/>
            <person name="Neuveglise C."/>
            <person name="Talla E."/>
            <person name="Goffard N."/>
            <person name="Frangeul L."/>
            <person name="Aigle M."/>
            <person name="Anthouard V."/>
            <person name="Babour A."/>
            <person name="Barbe V."/>
            <person name="Barnay S."/>
            <person name="Blanchin S."/>
            <person name="Beckerich J.-M."/>
            <person name="Beyne E."/>
            <person name="Bleykasten C."/>
            <person name="Boisrame A."/>
            <person name="Boyer J."/>
            <person name="Cattolico L."/>
            <person name="Confanioleri F."/>
            <person name="de Daruvar A."/>
            <person name="Despons L."/>
            <person name="Fabre E."/>
            <person name="Fairhead C."/>
            <person name="Ferry-Dumazet H."/>
            <person name="Groppi A."/>
            <person name="Hantraye F."/>
            <person name="Hennequin C."/>
            <person name="Jauniaux N."/>
            <person name="Joyet P."/>
            <person name="Kachouri R."/>
            <person name="Kerrest A."/>
            <person name="Koszul R."/>
            <person name="Lemaire M."/>
            <person name="Lesur I."/>
            <person name="Ma L."/>
            <person name="Muller H."/>
            <person name="Nicaud J.-M."/>
            <person name="Nikolski M."/>
            <person name="Oztas S."/>
            <person name="Ozier-Kalogeropoulos O."/>
            <person name="Pellenz S."/>
            <person name="Potier S."/>
            <person name="Richard G.-F."/>
            <person name="Straub M.-L."/>
            <person name="Suleau A."/>
            <person name="Swennen D."/>
            <person name="Tekaia F."/>
            <person name="Wesolowski-Louvel M."/>
            <person name="Westhof E."/>
            <person name="Wirth B."/>
            <person name="Zeniou-Meyer M."/>
            <person name="Zivanovic Y."/>
            <person name="Bolotin-Fukuhara M."/>
            <person name="Thierry A."/>
            <person name="Bouchier C."/>
            <person name="Caudron B."/>
            <person name="Scarpelli C."/>
            <person name="Gaillardin C."/>
            <person name="Weissenbach J."/>
            <person name="Wincker P."/>
            <person name="Souciet J.-L."/>
        </authorList>
    </citation>
    <scope>NUCLEOTIDE SEQUENCE [LARGE SCALE GENOMIC DNA]</scope>
    <source>
        <strain>ATCC 2001 / BCRC 20586 / JCM 3761 / NBRC 0622 / NRRL Y-65 / CBS 138</strain>
    </source>
</reference>